<sequence length="273" mass="30115">MTTLQQPQATESHNTDVALSLQNVTISYGNFEAVKNVYCEIPRGKVTAFIGPSGCGKSTVLRSLNRMNDLIEGCSLKGSILFGGVDLYGPKIDPVEVRRRIGIVFQQPNPFPKSIYENIAFGARINGYTGDMDELVERSLRQAAVWDECKDKLNESGYSLSGGQQQRLCIARTIAIQPEVILMDEPCSALDPISTLKIEETMHELKKSFTIVIVTHNMQQAVRVSDMTAFYNAEAVEGGTGKVGYLVEFNDTDKIFNAPQQQATQDYVSGRFG</sequence>
<reference key="1">
    <citation type="submission" date="2005-07" db="EMBL/GenBank/DDBJ databases">
        <title>Complete sequence of Synechococcus sp. CC9605.</title>
        <authorList>
            <consortium name="US DOE Joint Genome Institute"/>
            <person name="Copeland A."/>
            <person name="Lucas S."/>
            <person name="Lapidus A."/>
            <person name="Barry K."/>
            <person name="Detter J.C."/>
            <person name="Glavina T."/>
            <person name="Hammon N."/>
            <person name="Israni S."/>
            <person name="Pitluck S."/>
            <person name="Schmutz J."/>
            <person name="Martinez M."/>
            <person name="Larimer F."/>
            <person name="Land M."/>
            <person name="Kyrpides N."/>
            <person name="Ivanova N."/>
            <person name="Richardson P."/>
        </authorList>
    </citation>
    <scope>NUCLEOTIDE SEQUENCE [LARGE SCALE GENOMIC DNA]</scope>
    <source>
        <strain>CC9605</strain>
    </source>
</reference>
<feature type="chain" id="PRO_0000272557" description="Phosphate import ATP-binding protein PstB">
    <location>
        <begin position="1"/>
        <end position="273"/>
    </location>
</feature>
<feature type="domain" description="ABC transporter" evidence="1">
    <location>
        <begin position="19"/>
        <end position="258"/>
    </location>
</feature>
<feature type="binding site" evidence="1">
    <location>
        <begin position="51"/>
        <end position="58"/>
    </location>
    <ligand>
        <name>ATP</name>
        <dbReference type="ChEBI" id="CHEBI:30616"/>
    </ligand>
</feature>
<dbReference type="EC" id="7.3.2.1" evidence="1"/>
<dbReference type="EMBL" id="CP000110">
    <property type="protein sequence ID" value="ABB35153.1"/>
    <property type="molecule type" value="Genomic_DNA"/>
</dbReference>
<dbReference type="RefSeq" id="WP_011364370.1">
    <property type="nucleotide sequence ID" value="NC_007516.1"/>
</dbReference>
<dbReference type="SMR" id="Q3AJS9"/>
<dbReference type="STRING" id="110662.Syncc9605_1399"/>
<dbReference type="KEGG" id="syd:Syncc9605_1399"/>
<dbReference type="eggNOG" id="COG1117">
    <property type="taxonomic scope" value="Bacteria"/>
</dbReference>
<dbReference type="HOGENOM" id="CLU_000604_1_22_3"/>
<dbReference type="OrthoDB" id="9802185at2"/>
<dbReference type="GO" id="GO:0005886">
    <property type="term" value="C:plasma membrane"/>
    <property type="evidence" value="ECO:0007669"/>
    <property type="project" value="UniProtKB-SubCell"/>
</dbReference>
<dbReference type="GO" id="GO:0005524">
    <property type="term" value="F:ATP binding"/>
    <property type="evidence" value="ECO:0007669"/>
    <property type="project" value="UniProtKB-KW"/>
</dbReference>
<dbReference type="GO" id="GO:0016887">
    <property type="term" value="F:ATP hydrolysis activity"/>
    <property type="evidence" value="ECO:0007669"/>
    <property type="project" value="InterPro"/>
</dbReference>
<dbReference type="GO" id="GO:0015415">
    <property type="term" value="F:ATPase-coupled phosphate ion transmembrane transporter activity"/>
    <property type="evidence" value="ECO:0007669"/>
    <property type="project" value="UniProtKB-EC"/>
</dbReference>
<dbReference type="GO" id="GO:0035435">
    <property type="term" value="P:phosphate ion transmembrane transport"/>
    <property type="evidence" value="ECO:0007669"/>
    <property type="project" value="InterPro"/>
</dbReference>
<dbReference type="CDD" id="cd03260">
    <property type="entry name" value="ABC_PstB_phosphate_transporter"/>
    <property type="match status" value="1"/>
</dbReference>
<dbReference type="Gene3D" id="3.40.50.300">
    <property type="entry name" value="P-loop containing nucleotide triphosphate hydrolases"/>
    <property type="match status" value="1"/>
</dbReference>
<dbReference type="InterPro" id="IPR003593">
    <property type="entry name" value="AAA+_ATPase"/>
</dbReference>
<dbReference type="InterPro" id="IPR003439">
    <property type="entry name" value="ABC_transporter-like_ATP-bd"/>
</dbReference>
<dbReference type="InterPro" id="IPR017871">
    <property type="entry name" value="ABC_transporter-like_CS"/>
</dbReference>
<dbReference type="InterPro" id="IPR027417">
    <property type="entry name" value="P-loop_NTPase"/>
</dbReference>
<dbReference type="InterPro" id="IPR005670">
    <property type="entry name" value="PstB-like"/>
</dbReference>
<dbReference type="NCBIfam" id="TIGR00972">
    <property type="entry name" value="3a0107s01c2"/>
    <property type="match status" value="1"/>
</dbReference>
<dbReference type="PANTHER" id="PTHR43423">
    <property type="entry name" value="ABC TRANSPORTER I FAMILY MEMBER 17"/>
    <property type="match status" value="1"/>
</dbReference>
<dbReference type="PANTHER" id="PTHR43423:SF1">
    <property type="entry name" value="ABC TRANSPORTER I FAMILY MEMBER 17"/>
    <property type="match status" value="1"/>
</dbReference>
<dbReference type="Pfam" id="PF00005">
    <property type="entry name" value="ABC_tran"/>
    <property type="match status" value="1"/>
</dbReference>
<dbReference type="SMART" id="SM00382">
    <property type="entry name" value="AAA"/>
    <property type="match status" value="1"/>
</dbReference>
<dbReference type="SUPFAM" id="SSF52540">
    <property type="entry name" value="P-loop containing nucleoside triphosphate hydrolases"/>
    <property type="match status" value="1"/>
</dbReference>
<dbReference type="PROSITE" id="PS00211">
    <property type="entry name" value="ABC_TRANSPORTER_1"/>
    <property type="match status" value="1"/>
</dbReference>
<dbReference type="PROSITE" id="PS50893">
    <property type="entry name" value="ABC_TRANSPORTER_2"/>
    <property type="match status" value="1"/>
</dbReference>
<dbReference type="PROSITE" id="PS51238">
    <property type="entry name" value="PSTB"/>
    <property type="match status" value="1"/>
</dbReference>
<name>PSTB_SYNSC</name>
<evidence type="ECO:0000255" key="1">
    <source>
        <dbReference type="HAMAP-Rule" id="MF_01702"/>
    </source>
</evidence>
<comment type="function">
    <text evidence="1">Part of the ABC transporter complex PstSACB involved in phosphate import. Responsible for energy coupling to the transport system.</text>
</comment>
<comment type="catalytic activity">
    <reaction evidence="1">
        <text>phosphate(out) + ATP + H2O = ADP + 2 phosphate(in) + H(+)</text>
        <dbReference type="Rhea" id="RHEA:24440"/>
        <dbReference type="ChEBI" id="CHEBI:15377"/>
        <dbReference type="ChEBI" id="CHEBI:15378"/>
        <dbReference type="ChEBI" id="CHEBI:30616"/>
        <dbReference type="ChEBI" id="CHEBI:43474"/>
        <dbReference type="ChEBI" id="CHEBI:456216"/>
        <dbReference type="EC" id="7.3.2.1"/>
    </reaction>
</comment>
<comment type="subunit">
    <text evidence="1">The complex is composed of two ATP-binding proteins (PstB), two transmembrane proteins (PstC and PstA) and a solute-binding protein (PstS).</text>
</comment>
<comment type="subcellular location">
    <subcellularLocation>
        <location evidence="1">Cell inner membrane</location>
        <topology evidence="1">Peripheral membrane protein</topology>
    </subcellularLocation>
</comment>
<comment type="similarity">
    <text evidence="1">Belongs to the ABC transporter superfamily. Phosphate importer (TC 3.A.1.7) family.</text>
</comment>
<keyword id="KW-0067">ATP-binding</keyword>
<keyword id="KW-0997">Cell inner membrane</keyword>
<keyword id="KW-1003">Cell membrane</keyword>
<keyword id="KW-0472">Membrane</keyword>
<keyword id="KW-0547">Nucleotide-binding</keyword>
<keyword id="KW-0592">Phosphate transport</keyword>
<keyword id="KW-1278">Translocase</keyword>
<keyword id="KW-0813">Transport</keyword>
<proteinExistence type="inferred from homology"/>
<accession>Q3AJS9</accession>
<organism>
    <name type="scientific">Synechococcus sp. (strain CC9605)</name>
    <dbReference type="NCBI Taxonomy" id="110662"/>
    <lineage>
        <taxon>Bacteria</taxon>
        <taxon>Bacillati</taxon>
        <taxon>Cyanobacteriota</taxon>
        <taxon>Cyanophyceae</taxon>
        <taxon>Synechococcales</taxon>
        <taxon>Synechococcaceae</taxon>
        <taxon>Synechococcus</taxon>
    </lineage>
</organism>
<gene>
    <name evidence="1" type="primary">pstB</name>
    <name type="ordered locus">Syncc9605_1399</name>
</gene>
<protein>
    <recommendedName>
        <fullName evidence="1">Phosphate import ATP-binding protein PstB</fullName>
        <ecNumber evidence="1">7.3.2.1</ecNumber>
    </recommendedName>
    <alternativeName>
        <fullName evidence="1">ABC phosphate transporter</fullName>
    </alternativeName>
    <alternativeName>
        <fullName evidence="1">Phosphate-transporting ATPase</fullName>
    </alternativeName>
</protein>